<reference key="1">
    <citation type="journal article" date="1994" name="Curr. Top. Microbiol. Immunol.">
        <title>Primer-directed sequencing of human papillomavirus types.</title>
        <authorList>
            <person name="Delius H."/>
            <person name="Hofmann B."/>
        </authorList>
    </citation>
    <scope>NUCLEOTIDE SEQUENCE [GENOMIC DNA]</scope>
</reference>
<reference key="2">
    <citation type="journal article" date="1992" name="J. Virol.">
        <title>Phylogenetic analysis of 48 papillomavirus types and 28 subtypes and variants: a showcase for the molecular evolution of DNA viruses.</title>
        <authorList>
            <person name="Chan S.-Y."/>
            <person name="Bernard H.U."/>
            <person name="Ong C.K."/>
            <person name="Chan S.P."/>
            <person name="Birgit H."/>
            <person name="Delius H."/>
        </authorList>
    </citation>
    <scope>NUCLEOTIDE SEQUENCE [GENOMIC DNA] OF 331-382</scope>
</reference>
<accession>Q05134</accession>
<keyword id="KW-0067">ATP-binding</keyword>
<keyword id="KW-0235">DNA replication</keyword>
<keyword id="KW-0238">DNA-binding</keyword>
<keyword id="KW-0244">Early protein</keyword>
<keyword id="KW-0347">Helicase</keyword>
<keyword id="KW-1048">Host nucleus</keyword>
<keyword id="KW-0378">Hydrolase</keyword>
<keyword id="KW-0413">Isomerase</keyword>
<keyword id="KW-1017">Isopeptide bond</keyword>
<keyword id="KW-0547">Nucleotide-binding</keyword>
<keyword id="KW-0597">Phosphoprotein</keyword>
<keyword id="KW-0832">Ubl conjugation</keyword>
<evidence type="ECO:0000255" key="1">
    <source>
        <dbReference type="HAMAP-Rule" id="MF_04000"/>
    </source>
</evidence>
<evidence type="ECO:0000256" key="2">
    <source>
        <dbReference type="SAM" id="MobiDB-lite"/>
    </source>
</evidence>
<sequence length="604" mass="68767">MADSKGSTSKEGLSDWCILEAECSDLENDFEQLFEQDTDSDVSDLLDNGELEQGNSLELFHQQECEQSEEQLQILKRKYLSPKAVAQLSPRLESISLSPQQKSKRRLFAEQDSGLELSLNNEAEDVSPEVEVPAIDSRPVDEGGSGAIDIDYLSLLRSSNIKATLMAKFKESFGVGFNELTRQFKSYKTCCNDWVLAVYAVHDDLFESSKQLLQQHCDYIWVRGIGAMTLYLLCFKAGKNRGTVHKLMTSMLNVQEQQILSEPPKLRNTAAALFWYKGGMGSGAFTHGTYPDWIAHQTILGHQNAEASTFDFSAMVQWAFDNNYLEEPDIAYQYAKLAPEDSNAVAWLAHNQQAKFVRECAAMVRFYKKGQMKEMSMSEWIHTKINEVEGEGHWSDIVKFLRYQDVNFITFLAAFKNFLHAVPKHNCILIYGPPNSGKSSFAMSLIKVLKGRVLSFVNSKSQFWLQPLGESKIALLDDVTDPCWVYIDTYLRNGLDGHFVSLDCKYKAPVQIKFPPLLLTSNINVHGETNYRYLHSRIKGFEFPHPFPMKPDNTPQFQLTDQSWKSFFERLWTQLDLSDQEEEGQHGESQRAFQCSARSANEHI</sequence>
<organism>
    <name type="scientific">Human papillomavirus 12</name>
    <dbReference type="NCBI Taxonomy" id="10604"/>
    <lineage>
        <taxon>Viruses</taxon>
        <taxon>Monodnaviria</taxon>
        <taxon>Shotokuvirae</taxon>
        <taxon>Cossaviricota</taxon>
        <taxon>Papovaviricetes</taxon>
        <taxon>Zurhausenvirales</taxon>
        <taxon>Papillomaviridae</taxon>
        <taxon>Firstpapillomavirinae</taxon>
        <taxon>Betapapillomavirus</taxon>
        <taxon>Betapapillomavirus 1</taxon>
    </lineage>
</organism>
<gene>
    <name evidence="1" type="primary">E1</name>
</gene>
<organismHost>
    <name type="scientific">Homo sapiens</name>
    <name type="common">Human</name>
    <dbReference type="NCBI Taxonomy" id="9606"/>
</organismHost>
<dbReference type="EC" id="5.6.2.4" evidence="1"/>
<dbReference type="EMBL" id="X74466">
    <property type="protein sequence ID" value="CAA52498.1"/>
    <property type="molecule type" value="Genomic_DNA"/>
</dbReference>
<dbReference type="EMBL" id="M96303">
    <property type="protein sequence ID" value="AAA46992.1"/>
    <property type="molecule type" value="Genomic_DNA"/>
</dbReference>
<dbReference type="PIR" id="S36540">
    <property type="entry name" value="S36540"/>
</dbReference>
<dbReference type="SMR" id="Q05134"/>
<dbReference type="Proteomes" id="UP000009106">
    <property type="component" value="Genome"/>
</dbReference>
<dbReference type="GO" id="GO:0042025">
    <property type="term" value="C:host cell nucleus"/>
    <property type="evidence" value="ECO:0007669"/>
    <property type="project" value="UniProtKB-SubCell"/>
</dbReference>
<dbReference type="GO" id="GO:0005524">
    <property type="term" value="F:ATP binding"/>
    <property type="evidence" value="ECO:0007669"/>
    <property type="project" value="UniProtKB-UniRule"/>
</dbReference>
<dbReference type="GO" id="GO:0016887">
    <property type="term" value="F:ATP hydrolysis activity"/>
    <property type="evidence" value="ECO:0007669"/>
    <property type="project" value="RHEA"/>
</dbReference>
<dbReference type="GO" id="GO:0003677">
    <property type="term" value="F:DNA binding"/>
    <property type="evidence" value="ECO:0007669"/>
    <property type="project" value="UniProtKB-UniRule"/>
</dbReference>
<dbReference type="GO" id="GO:0003678">
    <property type="term" value="F:DNA helicase activity"/>
    <property type="evidence" value="ECO:0007669"/>
    <property type="project" value="UniProtKB-UniRule"/>
</dbReference>
<dbReference type="GO" id="GO:0006260">
    <property type="term" value="P:DNA replication"/>
    <property type="evidence" value="ECO:0007669"/>
    <property type="project" value="UniProtKB-UniRule"/>
</dbReference>
<dbReference type="Gene3D" id="3.40.1310.10">
    <property type="match status" value="1"/>
</dbReference>
<dbReference type="Gene3D" id="3.40.50.300">
    <property type="entry name" value="P-loop containing nucleotide triphosphate hydrolases"/>
    <property type="match status" value="1"/>
</dbReference>
<dbReference type="Gene3D" id="1.10.10.510">
    <property type="entry name" value="Zinc finger, large T-antigen D1 domain"/>
    <property type="match status" value="1"/>
</dbReference>
<dbReference type="HAMAP" id="MF_04000">
    <property type="entry name" value="PPV_E1"/>
    <property type="match status" value="1"/>
</dbReference>
<dbReference type="InterPro" id="IPR014015">
    <property type="entry name" value="Helicase_SF3_DNA-vir"/>
</dbReference>
<dbReference type="InterPro" id="IPR027417">
    <property type="entry name" value="P-loop_NTPase"/>
</dbReference>
<dbReference type="InterPro" id="IPR001177">
    <property type="entry name" value="PPV_DNA_helicase_E1_C"/>
</dbReference>
<dbReference type="InterPro" id="IPR014000">
    <property type="entry name" value="PPV_DNA_helicase_E1_N"/>
</dbReference>
<dbReference type="InterPro" id="IPR046832">
    <property type="entry name" value="PPV_E1_DBD"/>
</dbReference>
<dbReference type="InterPro" id="IPR046935">
    <property type="entry name" value="PPV_E1_DBD_sf"/>
</dbReference>
<dbReference type="InterPro" id="IPR016393">
    <property type="entry name" value="Rep_E1_papillomaV"/>
</dbReference>
<dbReference type="InterPro" id="IPR037102">
    <property type="entry name" value="Znf_lg_T-Ag_D1_dom_sf"/>
</dbReference>
<dbReference type="Pfam" id="PF00519">
    <property type="entry name" value="PPV_E1_C"/>
    <property type="match status" value="1"/>
</dbReference>
<dbReference type="Pfam" id="PF20450">
    <property type="entry name" value="PPV_E1_DBD"/>
    <property type="match status" value="1"/>
</dbReference>
<dbReference type="Pfam" id="PF00524">
    <property type="entry name" value="PPV_E1_N"/>
    <property type="match status" value="1"/>
</dbReference>
<dbReference type="PIRSF" id="PIRSF003383">
    <property type="entry name" value="Rep_E1_papillomaV"/>
    <property type="match status" value="1"/>
</dbReference>
<dbReference type="SUPFAM" id="SSF55464">
    <property type="entry name" value="Origin of replication-binding domain, RBD-like"/>
    <property type="match status" value="1"/>
</dbReference>
<dbReference type="SUPFAM" id="SSF52540">
    <property type="entry name" value="P-loop containing nucleoside triphosphate hydrolases"/>
    <property type="match status" value="1"/>
</dbReference>
<dbReference type="PROSITE" id="PS51206">
    <property type="entry name" value="SF3_HELICASE_1"/>
    <property type="match status" value="1"/>
</dbReference>
<name>VE1_HPV12</name>
<proteinExistence type="inferred from homology"/>
<comment type="function">
    <text evidence="1">ATP-dependent DNA 3'-5' helicase required for initiation of viral DNA replication. It forms a complex with the viral E2 protein. The E1-E2 complex binds to the replication origin which contains binding sites for both proteins. During the initial step, a dimer of E1 interacts with a dimer of protein E2 leading to a complex that binds the viral origin of replication with high specificity. Then, a second dimer of E1 displaces the E2 dimer in an ATP-dependent manner to form the E1 tetramer. Following this, two E1 monomers are added to each half of the site, which results in the formation of two E1 trimers on the viral ori. Subsequently, two hexamers will be created. The double hexamer acts as a bi-directional helicase machinery and unwinds the viral DNA and then recruits the host DNA polymerase to start replication.</text>
</comment>
<comment type="catalytic activity">
    <reaction evidence="1">
        <text>Couples ATP hydrolysis with the unwinding of duplex DNA by translocating in the 3'-5' direction.</text>
        <dbReference type="EC" id="5.6.2.4"/>
    </reaction>
</comment>
<comment type="catalytic activity">
    <reaction evidence="1">
        <text>ATP + H2O = ADP + phosphate + H(+)</text>
        <dbReference type="Rhea" id="RHEA:13065"/>
        <dbReference type="ChEBI" id="CHEBI:15377"/>
        <dbReference type="ChEBI" id="CHEBI:15378"/>
        <dbReference type="ChEBI" id="CHEBI:30616"/>
        <dbReference type="ChEBI" id="CHEBI:43474"/>
        <dbReference type="ChEBI" id="CHEBI:456216"/>
        <dbReference type="EC" id="5.6.2.4"/>
    </reaction>
</comment>
<comment type="subunit">
    <text evidence="1">Can form hexamers. Interacts with E2 protein; this interaction increases E1 DNA binding specificity. Interacts with host DNA polymerase subunit POLA2. Interacts with host single stranded DNA-binding protein RPA1. Interacts with host TOP1; this interaction stimulates the enzymatic activity of TOP1.</text>
</comment>
<comment type="subcellular location">
    <subcellularLocation>
        <location evidence="1">Host nucleus</location>
    </subcellularLocation>
</comment>
<comment type="PTM">
    <text evidence="1">Phosphorylated.</text>
</comment>
<comment type="PTM">
    <text evidence="1">Sumoylated.</text>
</comment>
<comment type="similarity">
    <text evidence="1">Belongs to the papillomaviridae E1 protein family.</text>
</comment>
<feature type="chain" id="PRO_0000133110" description="Replication protein E1">
    <location>
        <begin position="1"/>
        <end position="604"/>
    </location>
</feature>
<feature type="domain" description="SF3 helicase" evidence="1">
    <location>
        <begin position="406"/>
        <end position="556"/>
    </location>
</feature>
<feature type="region of interest" description="DNA-binding region" evidence="1">
    <location>
        <begin position="144"/>
        <end position="307"/>
    </location>
</feature>
<feature type="region of interest" description="Disordered" evidence="2">
    <location>
        <begin position="579"/>
        <end position="604"/>
    </location>
</feature>
<feature type="short sequence motif" description="Nuclear localization signal" evidence="1">
    <location>
        <begin position="76"/>
        <end position="78"/>
    </location>
</feature>
<feature type="short sequence motif" description="Nuclear export signal" evidence="1">
    <location>
        <begin position="88"/>
        <end position="97"/>
    </location>
</feature>
<feature type="compositionally biased region" description="Polar residues" evidence="2">
    <location>
        <begin position="591"/>
        <end position="604"/>
    </location>
</feature>
<feature type="binding site" evidence="1">
    <location>
        <begin position="432"/>
        <end position="439"/>
    </location>
    <ligand>
        <name>ATP</name>
        <dbReference type="ChEBI" id="CHEBI:30616"/>
    </ligand>
</feature>
<feature type="modified residue" description="Phosphoserine; by host" evidence="1">
    <location>
        <position position="81"/>
    </location>
</feature>
<feature type="modified residue" description="Phosphoserine; by host" evidence="1">
    <location>
        <position position="89"/>
    </location>
</feature>
<feature type="cross-link" description="Glycyl lysine isopeptide (Lys-Gly) (interchain with G-Cter in SUMO)" evidence="1">
    <location>
        <position position="513"/>
    </location>
</feature>
<protein>
    <recommendedName>
        <fullName evidence="1">Replication protein E1</fullName>
        <ecNumber evidence="1">5.6.2.4</ecNumber>
    </recommendedName>
    <alternativeName>
        <fullName evidence="1">ATP-dependent helicase E1</fullName>
    </alternativeName>
    <alternativeName>
        <fullName evidence="1">DNA 3'-5' helicase E1</fullName>
    </alternativeName>
</protein>